<keyword id="KW-0997">Cell inner membrane</keyword>
<keyword id="KW-1003">Cell membrane</keyword>
<keyword id="KW-0445">Lipid transport</keyword>
<keyword id="KW-0472">Membrane</keyword>
<keyword id="KW-0812">Transmembrane</keyword>
<keyword id="KW-1133">Transmembrane helix</keyword>
<keyword id="KW-0813">Transport</keyword>
<reference key="1">
    <citation type="journal article" date="2001" name="Nature">
        <title>Complete genome sequence of a multiple drug resistant Salmonella enterica serovar Typhi CT18.</title>
        <authorList>
            <person name="Parkhill J."/>
            <person name="Dougan G."/>
            <person name="James K.D."/>
            <person name="Thomson N.R."/>
            <person name="Pickard D."/>
            <person name="Wain J."/>
            <person name="Churcher C.M."/>
            <person name="Mungall K.L."/>
            <person name="Bentley S.D."/>
            <person name="Holden M.T.G."/>
            <person name="Sebaihia M."/>
            <person name="Baker S."/>
            <person name="Basham D."/>
            <person name="Brooks K."/>
            <person name="Chillingworth T."/>
            <person name="Connerton P."/>
            <person name="Cronin A."/>
            <person name="Davis P."/>
            <person name="Davies R.M."/>
            <person name="Dowd L."/>
            <person name="White N."/>
            <person name="Farrar J."/>
            <person name="Feltwell T."/>
            <person name="Hamlin N."/>
            <person name="Haque A."/>
            <person name="Hien T.T."/>
            <person name="Holroyd S."/>
            <person name="Jagels K."/>
            <person name="Krogh A."/>
            <person name="Larsen T.S."/>
            <person name="Leather S."/>
            <person name="Moule S."/>
            <person name="O'Gaora P."/>
            <person name="Parry C."/>
            <person name="Quail M.A."/>
            <person name="Rutherford K.M."/>
            <person name="Simmonds M."/>
            <person name="Skelton J."/>
            <person name="Stevens K."/>
            <person name="Whitehead S."/>
            <person name="Barrell B.G."/>
        </authorList>
    </citation>
    <scope>NUCLEOTIDE SEQUENCE [LARGE SCALE GENOMIC DNA]</scope>
    <source>
        <strain>CT18</strain>
    </source>
</reference>
<reference key="2">
    <citation type="journal article" date="2003" name="J. Bacteriol.">
        <title>Comparative genomics of Salmonella enterica serovar Typhi strains Ty2 and CT18.</title>
        <authorList>
            <person name="Deng W."/>
            <person name="Liou S.-R."/>
            <person name="Plunkett G. III"/>
            <person name="Mayhew G.F."/>
            <person name="Rose D.J."/>
            <person name="Burland V."/>
            <person name="Kodoyianni V."/>
            <person name="Schwartz D.C."/>
            <person name="Blattner F.R."/>
        </authorList>
    </citation>
    <scope>NUCLEOTIDE SEQUENCE [LARGE SCALE GENOMIC DNA]</scope>
    <source>
        <strain>ATCC 700931 / Ty2</strain>
    </source>
</reference>
<organism>
    <name type="scientific">Salmonella typhi</name>
    <dbReference type="NCBI Taxonomy" id="90370"/>
    <lineage>
        <taxon>Bacteria</taxon>
        <taxon>Pseudomonadati</taxon>
        <taxon>Pseudomonadota</taxon>
        <taxon>Gammaproteobacteria</taxon>
        <taxon>Enterobacterales</taxon>
        <taxon>Enterobacteriaceae</taxon>
        <taxon>Salmonella</taxon>
    </lineage>
</organism>
<accession>Q8Z407</accession>
<accession>Q7C7F6</accession>
<proteinExistence type="inferred from homology"/>
<feature type="chain" id="PRO_0000309832" description="Lysophospholipid transporter LplT">
    <location>
        <begin position="1"/>
        <end position="400"/>
    </location>
</feature>
<feature type="transmembrane region" description="Helical" evidence="1">
    <location>
        <begin position="19"/>
        <end position="39"/>
    </location>
</feature>
<feature type="transmembrane region" description="Helical" evidence="1">
    <location>
        <begin position="53"/>
        <end position="73"/>
    </location>
</feature>
<feature type="transmembrane region" description="Helical" evidence="1">
    <location>
        <begin position="91"/>
        <end position="111"/>
    </location>
</feature>
<feature type="transmembrane region" description="Helical" evidence="1">
    <location>
        <begin position="139"/>
        <end position="159"/>
    </location>
</feature>
<feature type="transmembrane region" description="Helical" evidence="1">
    <location>
        <begin position="164"/>
        <end position="184"/>
    </location>
</feature>
<feature type="transmembrane region" description="Helical" evidence="1">
    <location>
        <begin position="195"/>
        <end position="213"/>
    </location>
</feature>
<feature type="transmembrane region" description="Helical" evidence="1">
    <location>
        <begin position="227"/>
        <end position="247"/>
    </location>
</feature>
<feature type="transmembrane region" description="Helical" evidence="1">
    <location>
        <begin position="257"/>
        <end position="277"/>
    </location>
</feature>
<feature type="transmembrane region" description="Helical" evidence="1">
    <location>
        <begin position="281"/>
        <end position="301"/>
    </location>
</feature>
<feature type="transmembrane region" description="Helical" evidence="1">
    <location>
        <begin position="304"/>
        <end position="324"/>
    </location>
</feature>
<feature type="transmembrane region" description="Helical" evidence="1">
    <location>
        <begin position="352"/>
        <end position="372"/>
    </location>
</feature>
<feature type="transmembrane region" description="Helical" evidence="1">
    <location>
        <begin position="373"/>
        <end position="393"/>
    </location>
</feature>
<dbReference type="EMBL" id="AE014613">
    <property type="protein sequence ID" value="AAO70472.1"/>
    <property type="molecule type" value="Genomic_DNA"/>
</dbReference>
<dbReference type="EMBL" id="AL513382">
    <property type="protein sequence ID" value="CAD02834.1"/>
    <property type="molecule type" value="Genomic_DNA"/>
</dbReference>
<dbReference type="RefSeq" id="NP_457403.1">
    <property type="nucleotide sequence ID" value="NC_003198.1"/>
</dbReference>
<dbReference type="RefSeq" id="WP_000004684.1">
    <property type="nucleotide sequence ID" value="NZ_WSUR01000055.1"/>
</dbReference>
<dbReference type="SMR" id="Q8Z407"/>
<dbReference type="STRING" id="220341.gene:17587034"/>
<dbReference type="KEGG" id="stt:t2918"/>
<dbReference type="KEGG" id="sty:STY3152"/>
<dbReference type="PATRIC" id="fig|220341.7.peg.3206"/>
<dbReference type="eggNOG" id="COG0477">
    <property type="taxonomic scope" value="Bacteria"/>
</dbReference>
<dbReference type="HOGENOM" id="CLU_047399_0_0_6"/>
<dbReference type="OMA" id="ICFGFNP"/>
<dbReference type="OrthoDB" id="9803968at2"/>
<dbReference type="Proteomes" id="UP000000541">
    <property type="component" value="Chromosome"/>
</dbReference>
<dbReference type="Proteomes" id="UP000002670">
    <property type="component" value="Chromosome"/>
</dbReference>
<dbReference type="GO" id="GO:0005886">
    <property type="term" value="C:plasma membrane"/>
    <property type="evidence" value="ECO:0007669"/>
    <property type="project" value="UniProtKB-SubCell"/>
</dbReference>
<dbReference type="GO" id="GO:0051978">
    <property type="term" value="F:lysophospholipid:sodium symporter activity"/>
    <property type="evidence" value="ECO:0007669"/>
    <property type="project" value="InterPro"/>
</dbReference>
<dbReference type="CDD" id="cd06173">
    <property type="entry name" value="MFS_MefA_like"/>
    <property type="match status" value="1"/>
</dbReference>
<dbReference type="Gene3D" id="1.20.1250.20">
    <property type="entry name" value="MFS general substrate transporter like domains"/>
    <property type="match status" value="1"/>
</dbReference>
<dbReference type="HAMAP" id="MF_01585">
    <property type="entry name" value="MFS_LplT"/>
    <property type="match status" value="1"/>
</dbReference>
<dbReference type="InterPro" id="IPR023727">
    <property type="entry name" value="LysoPLipid__transptr_LplT"/>
</dbReference>
<dbReference type="InterPro" id="IPR011701">
    <property type="entry name" value="MFS"/>
</dbReference>
<dbReference type="InterPro" id="IPR036259">
    <property type="entry name" value="MFS_trans_sf"/>
</dbReference>
<dbReference type="NCBIfam" id="NF008397">
    <property type="entry name" value="PRK11195.1"/>
    <property type="match status" value="1"/>
</dbReference>
<dbReference type="PANTHER" id="PTHR43266">
    <property type="entry name" value="MACROLIDE-EFFLUX PROTEIN"/>
    <property type="match status" value="1"/>
</dbReference>
<dbReference type="PANTHER" id="PTHR43266:SF2">
    <property type="entry name" value="MAJOR FACILITATOR SUPERFAMILY (MFS) PROFILE DOMAIN-CONTAINING PROTEIN"/>
    <property type="match status" value="1"/>
</dbReference>
<dbReference type="Pfam" id="PF07690">
    <property type="entry name" value="MFS_1"/>
    <property type="match status" value="1"/>
</dbReference>
<dbReference type="SUPFAM" id="SSF103473">
    <property type="entry name" value="MFS general substrate transporter"/>
    <property type="match status" value="1"/>
</dbReference>
<evidence type="ECO:0000255" key="1">
    <source>
        <dbReference type="HAMAP-Rule" id="MF_01585"/>
    </source>
</evidence>
<comment type="function">
    <text evidence="1">Catalyzes the facilitated diffusion of 2-acyl-glycero-3-phosphoethanolamine (2-acyl-GPE) into the cell.</text>
</comment>
<comment type="subcellular location">
    <subcellularLocation>
        <location evidence="1">Cell inner membrane</location>
        <topology evidence="1">Multi-pass membrane protein</topology>
    </subcellularLocation>
</comment>
<comment type="similarity">
    <text evidence="1">Belongs to the major facilitator superfamily. LplT (TC 2.A.1.42) family.</text>
</comment>
<gene>
    <name evidence="1" type="primary">lplT</name>
    <name type="ordered locus">STY3152</name>
    <name type="ordered locus">t2918</name>
</gene>
<sequence>MSESVRTNTSIWSKGMLSVIVAQFLSAFGDNALLFATLALLKAQFYPDWSQPVLQMVFVGAYILFAPFVGQIADSFAKGRVMMVANGLKLAGAAGICLGVNPFVGYTLVGIGAAAYSPAKYGILGELTTGDKLVKANGLMEASTIAAILLGSVAGGVLADWHVIAALVACALAYAGAVAANLFIPKLVAARPGQSWRLSAMTRSFFCACVVLWRNGETRFSLVGTGLFWGAGVTLRFLLVLWVPVALGITDNATPTYLNAMVAVGIVVGAGAAAKLVTLETVSRCMPAGILIGVVVAIFSLQHALLPAYALLLLIGMLGGFFVVPLNALLQERGKKSVGAGNAIAVQNLGENSAMLLMLGLYSLAVLVGVPAVAIGIGFGVLFALAIAALWIWQRRQASY</sequence>
<protein>
    <recommendedName>
        <fullName evidence="1">Lysophospholipid transporter LplT</fullName>
    </recommendedName>
</protein>
<name>LPLT_SALTI</name>